<feature type="initiator methionine" description="Removed" evidence="3">
    <location>
        <position position="1"/>
    </location>
</feature>
<feature type="chain" id="PRO_0000221274" description="Histone H3.2">
    <location>
        <begin position="2"/>
        <end position="136"/>
    </location>
</feature>
<feature type="region of interest" description="Disordered" evidence="2">
    <location>
        <begin position="1"/>
        <end position="43"/>
    </location>
</feature>
<feature type="modified residue" description="N6-methylated lysine" evidence="3">
    <location>
        <position position="5"/>
    </location>
</feature>
<feature type="modified residue" description="N6-acetyllysine; alternate" evidence="1">
    <location>
        <position position="10"/>
    </location>
</feature>
<feature type="modified residue" description="N6-methylated lysine; alternate" evidence="3">
    <location>
        <position position="10"/>
    </location>
</feature>
<feature type="modified residue" description="Phosphoserine" evidence="1">
    <location>
        <position position="11"/>
    </location>
</feature>
<feature type="modified residue" description="Phosphothreonine" evidence="1">
    <location>
        <position position="12"/>
    </location>
</feature>
<feature type="modified residue" description="N6-acetyllysine" evidence="1">
    <location>
        <position position="15"/>
    </location>
</feature>
<feature type="modified residue" description="N6-acetyllysine; alternate" evidence="1">
    <location>
        <position position="19"/>
    </location>
</feature>
<feature type="modified residue" description="N6-methylated lysine; alternate" evidence="1">
    <location>
        <position position="19"/>
    </location>
</feature>
<feature type="modified residue" description="N6-acetyllysine; alternate" evidence="1">
    <location>
        <position position="24"/>
    </location>
</feature>
<feature type="modified residue" description="N6-methylated lysine; alternate" evidence="1">
    <location>
        <position position="24"/>
    </location>
</feature>
<feature type="modified residue" description="N6-methylated lysine" evidence="3">
    <location>
        <position position="28"/>
    </location>
</feature>
<feature type="modified residue" description="Phosphoserine" evidence="1">
    <location>
        <position position="29"/>
    </location>
</feature>
<feature type="modified residue" description="N6-methylated lysine" evidence="1">
    <location>
        <position position="37"/>
    </location>
</feature>
<feature type="sequence variant">
    <original>R</original>
    <variation>K</variation>
    <location>
        <position position="54"/>
    </location>
</feature>
<feature type="sequence variant">
    <original>A</original>
    <variation>S</variation>
    <location>
        <position position="97"/>
    </location>
</feature>
<feature type="sequence variant">
    <original>T</original>
    <variation>S</variation>
    <location>
        <position position="108"/>
    </location>
</feature>
<feature type="sequence variant">
    <original>I</original>
    <variation>V</variation>
    <location>
        <position position="125"/>
    </location>
</feature>
<dbReference type="PIR" id="A23604">
    <property type="entry name" value="HSEAH3"/>
</dbReference>
<dbReference type="BMRB" id="P08903"/>
<dbReference type="SMR" id="P08903"/>
<dbReference type="GO" id="GO:0000786">
    <property type="term" value="C:nucleosome"/>
    <property type="evidence" value="ECO:0007669"/>
    <property type="project" value="UniProtKB-KW"/>
</dbReference>
<dbReference type="GO" id="GO:0005634">
    <property type="term" value="C:nucleus"/>
    <property type="evidence" value="ECO:0007669"/>
    <property type="project" value="UniProtKB-SubCell"/>
</dbReference>
<dbReference type="GO" id="GO:0003677">
    <property type="term" value="F:DNA binding"/>
    <property type="evidence" value="ECO:0007669"/>
    <property type="project" value="UniProtKB-KW"/>
</dbReference>
<dbReference type="GO" id="GO:0046982">
    <property type="term" value="F:protein heterodimerization activity"/>
    <property type="evidence" value="ECO:0007669"/>
    <property type="project" value="InterPro"/>
</dbReference>
<dbReference type="GO" id="GO:0030527">
    <property type="term" value="F:structural constituent of chromatin"/>
    <property type="evidence" value="ECO:0007669"/>
    <property type="project" value="InterPro"/>
</dbReference>
<dbReference type="CDD" id="cd22911">
    <property type="entry name" value="HFD_H3"/>
    <property type="match status" value="1"/>
</dbReference>
<dbReference type="FunFam" id="1.10.20.10:FF:000078">
    <property type="entry name" value="Histone H3"/>
    <property type="match status" value="1"/>
</dbReference>
<dbReference type="FunFam" id="1.10.20.10:FF:000044">
    <property type="entry name" value="Histone H3.3"/>
    <property type="match status" value="1"/>
</dbReference>
<dbReference type="Gene3D" id="1.10.20.10">
    <property type="entry name" value="Histone, subunit A"/>
    <property type="match status" value="1"/>
</dbReference>
<dbReference type="InterPro" id="IPR009072">
    <property type="entry name" value="Histone-fold"/>
</dbReference>
<dbReference type="InterPro" id="IPR007125">
    <property type="entry name" value="Histone_H2A/H2B/H3"/>
</dbReference>
<dbReference type="InterPro" id="IPR000164">
    <property type="entry name" value="Histone_H3/CENP-A"/>
</dbReference>
<dbReference type="PANTHER" id="PTHR11426">
    <property type="entry name" value="HISTONE H3"/>
    <property type="match status" value="1"/>
</dbReference>
<dbReference type="Pfam" id="PF00125">
    <property type="entry name" value="Histone"/>
    <property type="match status" value="1"/>
</dbReference>
<dbReference type="PRINTS" id="PR00622">
    <property type="entry name" value="HISTONEH3"/>
</dbReference>
<dbReference type="SMART" id="SM00428">
    <property type="entry name" value="H3"/>
    <property type="match status" value="1"/>
</dbReference>
<dbReference type="SUPFAM" id="SSF47113">
    <property type="entry name" value="Histone-fold"/>
    <property type="match status" value="1"/>
</dbReference>
<dbReference type="PROSITE" id="PS00322">
    <property type="entry name" value="HISTONE_H3_1"/>
    <property type="match status" value="1"/>
</dbReference>
<dbReference type="PROSITE" id="PS00959">
    <property type="entry name" value="HISTONE_H3_2"/>
    <property type="match status" value="1"/>
</dbReference>
<organism>
    <name type="scientific">Encephalartos altensteinii</name>
    <name type="common">Altenstein's bread tree</name>
    <name type="synonym">Eastern Cape giant cycad</name>
    <dbReference type="NCBI Taxonomy" id="3300"/>
    <lineage>
        <taxon>Eukaryota</taxon>
        <taxon>Viridiplantae</taxon>
        <taxon>Streptophyta</taxon>
        <taxon>Embryophyta</taxon>
        <taxon>Tracheophyta</taxon>
        <taxon>Spermatophyta</taxon>
        <taxon>Cycadidae</taxon>
        <taxon>Cycadales</taxon>
        <taxon>Zamiaceae</taxon>
        <taxon>Encephalartos</taxon>
    </lineage>
</organism>
<proteinExistence type="evidence at protein level"/>
<keyword id="KW-0007">Acetylation</keyword>
<keyword id="KW-0158">Chromosome</keyword>
<keyword id="KW-0903">Direct protein sequencing</keyword>
<keyword id="KW-0238">DNA-binding</keyword>
<keyword id="KW-0488">Methylation</keyword>
<keyword id="KW-0544">Nucleosome core</keyword>
<keyword id="KW-0539">Nucleus</keyword>
<keyword id="KW-0597">Phosphoprotein</keyword>
<sequence>MARTKQTARKSTGGKAPRKQLATKAARKSAPATGGVKKPHRFRPGTVALREIRRYQKSTELLIRKLPFQRLVREIAQDFKTDLRFQSSAVAALQEAAEAYLVGLFEDTNLCAIHAKRVTIMPKDIQLARRIRGERA</sequence>
<accession>P08903</accession>
<evidence type="ECO:0000250" key="1"/>
<evidence type="ECO:0000256" key="2">
    <source>
        <dbReference type="SAM" id="MobiDB-lite"/>
    </source>
</evidence>
<evidence type="ECO:0000269" key="3">
    <source ref="1"/>
</evidence>
<evidence type="ECO:0000305" key="4"/>
<protein>
    <recommendedName>
        <fullName>Histone H3.2</fullName>
    </recommendedName>
</protein>
<name>H32_ENCAL</name>
<comment type="function">
    <text>Core component of nucleosome. Nucleosomes wrap and compact DNA into chromatin, limiting DNA accessibility to the cellular machineries which require DNA as a template. Histones thereby play a central role in transcription regulation, DNA repair, DNA replication and chromosomal stability. DNA accessibility is regulated via a complex set of post-translational modifications of histones, also called histone code, and nucleosome remodeling.</text>
</comment>
<comment type="subunit">
    <text>The nucleosome is a histone octamer containing two molecules each of H2A, H2B, H3 and H4 assembled in one H3-H4 heterotetramer and two H2A-H2B heterodimers. The octamer wraps approximately 147 bp of DNA.</text>
</comment>
<comment type="subcellular location">
    <subcellularLocation>
        <location evidence="1">Nucleus</location>
    </subcellularLocation>
    <subcellularLocation>
        <location evidence="1">Chromosome</location>
    </subcellularLocation>
</comment>
<comment type="PTM">
    <text evidence="1">Acetylation is generally linked to gene activation. Can be acetylated to form H3K9ac, H3K14ac, H3K18ac and H3K23ac. H3K9ac could compete with H3K9me and prevent gene silencing. H3K9ac is restricted to euchromatin (By similarity).</text>
</comment>
<comment type="PTM">
    <text evidence="1">Methylated to form mainly H3K4me, H3K9me, H3K18me, H3K23me, H3K27me and H3K36me. H3K4me1/2/3, H3K9me3, H3K27me3 and H3K36me1/2/3 are typical marks for euchromatin, whereas heterochromatic chromocenters are enriched in H3K9me1/2 and H3K27me1/2. H2BK143ub1 is probably prerequisite for H3K4me (By similarity).</text>
</comment>
<comment type="PTM">
    <text evidence="1">Can be phosphorylated to form H3S10ph, H3T11ph and H3S28ph.</text>
</comment>
<comment type="similarity">
    <text evidence="4">Belongs to the histone H3 family.</text>
</comment>
<comment type="caution">
    <text evidence="4">To ensure consistency between histone entries, we follow the 'Brno' nomenclature for histone modifications, with positions referring to those used in the literature for the 'closest' model organism. Due to slight variations in histone sequences between organisms and to the presence of initiator methionine in UniProtKB/Swiss-Prot sequences, the actual positions of modified amino acids in the sequence generally differ. In this entry the following conventions are used: H3K4me = methylated Lys-5; H3K9ac = acetylated Lys-10; H3K9me = methylated Lys-10; H3S10ph = phosphorylated Ser-11; H3T11ph = phosphorylated Thr-12; H3K14ac = acetylated Lys-15; H3K18ac = acetylated Lys-19; H3K18me = methylated Lys-19; H3K23ac = acetylated Lys-24; H3K23me = methylated Lys-24; H3K27me = methylated Lys-28; H3S28ph = phosphorylated Ser-29; H3K36me = methylated Lys-37.</text>
</comment>
<reference key="1">
    <citation type="journal article" date="1986" name="FEBS Lett.">
        <title>The primary structure of histone H3 from cycad pollen.</title>
        <authorList>
            <person name="Brandt W.F."/>
            <person name="von Holt C."/>
        </authorList>
    </citation>
    <scope>PROTEIN SEQUENCE OF 2-136</scope>
    <scope>METHYLATION AT LYS-5; LYS-10 AND LYS-28</scope>
    <source>
        <tissue>Pollen</tissue>
    </source>
</reference>